<accession>B5F1U0</accession>
<keyword id="KW-0436">Ligase</keyword>
<keyword id="KW-0597">Phosphoprotein</keyword>
<keyword id="KW-0662">Pyridine nucleotide biosynthesis</keyword>
<proteinExistence type="inferred from homology"/>
<name>PNCB_SALA4</name>
<protein>
    <recommendedName>
        <fullName evidence="1">Nicotinate phosphoribosyltransferase</fullName>
        <shortName evidence="1">NAPRTase</shortName>
        <ecNumber evidence="1">6.3.4.21</ecNumber>
    </recommendedName>
</protein>
<reference key="1">
    <citation type="journal article" date="2011" name="J. Bacteriol.">
        <title>Comparative genomics of 28 Salmonella enterica isolates: evidence for CRISPR-mediated adaptive sublineage evolution.</title>
        <authorList>
            <person name="Fricke W.F."/>
            <person name="Mammel M.K."/>
            <person name="McDermott P.F."/>
            <person name="Tartera C."/>
            <person name="White D.G."/>
            <person name="Leclerc J.E."/>
            <person name="Ravel J."/>
            <person name="Cebula T.A."/>
        </authorList>
    </citation>
    <scope>NUCLEOTIDE SEQUENCE [LARGE SCALE GENOMIC DNA]</scope>
    <source>
        <strain>SL483</strain>
    </source>
</reference>
<dbReference type="EC" id="6.3.4.21" evidence="1"/>
<dbReference type="EMBL" id="CP001138">
    <property type="protein sequence ID" value="ACH50801.1"/>
    <property type="molecule type" value="Genomic_DNA"/>
</dbReference>
<dbReference type="RefSeq" id="WP_000191407.1">
    <property type="nucleotide sequence ID" value="NC_011149.1"/>
</dbReference>
<dbReference type="SMR" id="B5F1U0"/>
<dbReference type="KEGG" id="sea:SeAg_B1014"/>
<dbReference type="HOGENOM" id="CLU_030991_1_0_6"/>
<dbReference type="UniPathway" id="UPA00253">
    <property type="reaction ID" value="UER00457"/>
</dbReference>
<dbReference type="Proteomes" id="UP000008819">
    <property type="component" value="Chromosome"/>
</dbReference>
<dbReference type="GO" id="GO:0005829">
    <property type="term" value="C:cytosol"/>
    <property type="evidence" value="ECO:0007669"/>
    <property type="project" value="TreeGrafter"/>
</dbReference>
<dbReference type="GO" id="GO:0004516">
    <property type="term" value="F:nicotinate phosphoribosyltransferase activity"/>
    <property type="evidence" value="ECO:0007669"/>
    <property type="project" value="UniProtKB-UniRule"/>
</dbReference>
<dbReference type="GO" id="GO:0034355">
    <property type="term" value="P:NAD biosynthetic process via the salvage pathway"/>
    <property type="evidence" value="ECO:0007669"/>
    <property type="project" value="TreeGrafter"/>
</dbReference>
<dbReference type="CDD" id="cd01401">
    <property type="entry name" value="PncB_like"/>
    <property type="match status" value="1"/>
</dbReference>
<dbReference type="FunFam" id="3.20.140.10:FF:000001">
    <property type="entry name" value="Nicotinate phosphoribosyltransferase"/>
    <property type="match status" value="1"/>
</dbReference>
<dbReference type="Gene3D" id="3.20.140.10">
    <property type="entry name" value="nicotinate phosphoribosyltransferase"/>
    <property type="match status" value="1"/>
</dbReference>
<dbReference type="HAMAP" id="MF_00570">
    <property type="entry name" value="NAPRTase"/>
    <property type="match status" value="1"/>
</dbReference>
<dbReference type="InterPro" id="IPR041525">
    <property type="entry name" value="N/Namide_PRibTrfase"/>
</dbReference>
<dbReference type="InterPro" id="IPR040727">
    <property type="entry name" value="NAPRTase_N"/>
</dbReference>
<dbReference type="InterPro" id="IPR006406">
    <property type="entry name" value="Nic_PRibTrfase"/>
</dbReference>
<dbReference type="InterPro" id="IPR007229">
    <property type="entry name" value="Nic_PRibTrfase-Fam"/>
</dbReference>
<dbReference type="InterPro" id="IPR036068">
    <property type="entry name" value="Nicotinate_pribotase-like_C"/>
</dbReference>
<dbReference type="NCBIfam" id="TIGR01514">
    <property type="entry name" value="NAPRTase"/>
    <property type="match status" value="1"/>
</dbReference>
<dbReference type="NCBIfam" id="NF003704">
    <property type="entry name" value="PRK05321.1"/>
    <property type="match status" value="1"/>
</dbReference>
<dbReference type="PANTHER" id="PTHR11098">
    <property type="entry name" value="NICOTINATE PHOSPHORIBOSYLTRANSFERASE"/>
    <property type="match status" value="1"/>
</dbReference>
<dbReference type="PANTHER" id="PTHR11098:SF1">
    <property type="entry name" value="NICOTINATE PHOSPHORIBOSYLTRANSFERASE"/>
    <property type="match status" value="1"/>
</dbReference>
<dbReference type="Pfam" id="PF04095">
    <property type="entry name" value="NAPRTase"/>
    <property type="match status" value="1"/>
</dbReference>
<dbReference type="Pfam" id="PF17767">
    <property type="entry name" value="NAPRTase_N"/>
    <property type="match status" value="1"/>
</dbReference>
<dbReference type="PIRSF" id="PIRSF000484">
    <property type="entry name" value="NAPRT"/>
    <property type="match status" value="1"/>
</dbReference>
<dbReference type="SUPFAM" id="SSF51690">
    <property type="entry name" value="Nicotinate/Quinolinate PRTase C-terminal domain-like"/>
    <property type="match status" value="1"/>
</dbReference>
<dbReference type="SUPFAM" id="SSF54675">
    <property type="entry name" value="Nicotinate/Quinolinate PRTase N-terminal domain-like"/>
    <property type="match status" value="1"/>
</dbReference>
<gene>
    <name evidence="1" type="primary">pncB</name>
    <name type="ordered locus">SeAg_B1014</name>
</gene>
<sequence length="400" mass="45702">MTQFASPVLHSLLDTDAYKLHMQQAVFHHYYDVQVAAEFRCRGDDLLGIYADAIREQVDAMQHLRLQEDEFQWLSGLPFFKPDYLNWLREFRYNPAQVCVTNDNGKLNIRLTGPWREVIMWEVPLLAVISELVHHYRSPNAGVDQALDALESKLVDFTALTANLDMSRFYLMDFGTRRRFSREVQQAIVKRLQQESWFVGTSNYDLARRLALTPMGTQAHEWFQAHQQISPDLATSQRAALAAWLNEYPDQLGIALTDCITMDAFLRDFGIEFASRYQGLRHDSGDPVAWGEKAIAHYEKLGIDPLTKTLVFSDNLDLPKAVELYRHFASRVQLSFGIGTRLTCDIPQVKPLNIVIKLVECNGKPVAKLSDSPGKTICHDKAFVRALRKAFDLPQVRKAS</sequence>
<comment type="function">
    <text evidence="1">Catalyzes the synthesis of beta-nicotinate D-ribonucleotide from nicotinate and 5-phospho-D-ribose 1-phosphate at the expense of ATP.</text>
</comment>
<comment type="catalytic activity">
    <reaction evidence="1">
        <text>nicotinate + 5-phospho-alpha-D-ribose 1-diphosphate + ATP + H2O = nicotinate beta-D-ribonucleotide + ADP + phosphate + diphosphate</text>
        <dbReference type="Rhea" id="RHEA:36163"/>
        <dbReference type="ChEBI" id="CHEBI:15377"/>
        <dbReference type="ChEBI" id="CHEBI:30616"/>
        <dbReference type="ChEBI" id="CHEBI:32544"/>
        <dbReference type="ChEBI" id="CHEBI:33019"/>
        <dbReference type="ChEBI" id="CHEBI:43474"/>
        <dbReference type="ChEBI" id="CHEBI:57502"/>
        <dbReference type="ChEBI" id="CHEBI:58017"/>
        <dbReference type="ChEBI" id="CHEBI:456216"/>
        <dbReference type="EC" id="6.3.4.21"/>
    </reaction>
</comment>
<comment type="pathway">
    <text evidence="1">Cofactor biosynthesis; NAD(+) biosynthesis; nicotinate D-ribonucleotide from nicotinate: step 1/1.</text>
</comment>
<comment type="PTM">
    <text evidence="1">Transiently phosphorylated on a His residue during the reaction cycle. Phosphorylation strongly increases the affinity for substrates and increases the rate of nicotinate D-ribonucleotide production. Dephosphorylation regenerates the low-affinity form of the enzyme, leading to product release.</text>
</comment>
<comment type="similarity">
    <text evidence="1">Belongs to the NAPRTase family.</text>
</comment>
<organism>
    <name type="scientific">Salmonella agona (strain SL483)</name>
    <dbReference type="NCBI Taxonomy" id="454166"/>
    <lineage>
        <taxon>Bacteria</taxon>
        <taxon>Pseudomonadati</taxon>
        <taxon>Pseudomonadota</taxon>
        <taxon>Gammaproteobacteria</taxon>
        <taxon>Enterobacterales</taxon>
        <taxon>Enterobacteriaceae</taxon>
        <taxon>Salmonella</taxon>
    </lineage>
</organism>
<feature type="chain" id="PRO_1000129482" description="Nicotinate phosphoribosyltransferase">
    <location>
        <begin position="1"/>
        <end position="400"/>
    </location>
</feature>
<feature type="modified residue" description="Phosphohistidine; by autocatalysis" evidence="1">
    <location>
        <position position="220"/>
    </location>
</feature>
<evidence type="ECO:0000255" key="1">
    <source>
        <dbReference type="HAMAP-Rule" id="MF_00570"/>
    </source>
</evidence>